<sequence length="139" mass="15747">MTYELKMPILGFDATKIELEKIDETFSKIRGLDGKQPFEITLINPFSLCDYAFTIPTADERLLDLDESRGDKVEVYCVVVLQKPIENSVVNLMAPFVFNPANACALQVTTLPVAEYPQFSKVLPLKEFLSKEILETLNR</sequence>
<gene>
    <name evidence="1" type="primary">fliW2</name>
    <name type="ordered locus">HH_0932</name>
</gene>
<feature type="chain" id="PRO_0000272994" description="Flagellar assembly factor FliW 2">
    <location>
        <begin position="1"/>
        <end position="139"/>
    </location>
</feature>
<protein>
    <recommendedName>
        <fullName evidence="1">Flagellar assembly factor FliW 2</fullName>
    </recommendedName>
</protein>
<reference key="1">
    <citation type="journal article" date="2003" name="Proc. Natl. Acad. Sci. U.S.A.">
        <title>The complete genome sequence of the carcinogenic bacterium Helicobacter hepaticus.</title>
        <authorList>
            <person name="Suerbaum S."/>
            <person name="Josenhans C."/>
            <person name="Sterzenbach T."/>
            <person name="Drescher B."/>
            <person name="Brandt P."/>
            <person name="Bell M."/>
            <person name="Droege M."/>
            <person name="Fartmann B."/>
            <person name="Fischer H.-P."/>
            <person name="Ge Z."/>
            <person name="Hoerster A."/>
            <person name="Holland R."/>
            <person name="Klein K."/>
            <person name="Koenig J."/>
            <person name="Macko L."/>
            <person name="Mendz G.L."/>
            <person name="Nyakatura G."/>
            <person name="Schauer D.B."/>
            <person name="Shen Z."/>
            <person name="Weber J."/>
            <person name="Frosch M."/>
            <person name="Fox J.G."/>
        </authorList>
    </citation>
    <scope>NUCLEOTIDE SEQUENCE [LARGE SCALE GENOMIC DNA]</scope>
    <source>
        <strain>ATCC 51449 / 3B1</strain>
    </source>
</reference>
<evidence type="ECO:0000255" key="1">
    <source>
        <dbReference type="HAMAP-Rule" id="MF_01185"/>
    </source>
</evidence>
<organism>
    <name type="scientific">Helicobacter hepaticus (strain ATCC 51449 / 3B1)</name>
    <dbReference type="NCBI Taxonomy" id="235279"/>
    <lineage>
        <taxon>Bacteria</taxon>
        <taxon>Pseudomonadati</taxon>
        <taxon>Campylobacterota</taxon>
        <taxon>Epsilonproteobacteria</taxon>
        <taxon>Campylobacterales</taxon>
        <taxon>Helicobacteraceae</taxon>
        <taxon>Helicobacter</taxon>
    </lineage>
</organism>
<name>FLIW2_HELHP</name>
<proteinExistence type="inferred from homology"/>
<dbReference type="EMBL" id="AE017125">
    <property type="protein sequence ID" value="AAP77529.1"/>
    <property type="molecule type" value="Genomic_DNA"/>
</dbReference>
<dbReference type="SMR" id="Q7VHN3"/>
<dbReference type="STRING" id="235279.HH_0932"/>
<dbReference type="KEGG" id="hhe:HH_0932"/>
<dbReference type="eggNOG" id="COG1699">
    <property type="taxonomic scope" value="Bacteria"/>
</dbReference>
<dbReference type="HOGENOM" id="CLU_112356_2_1_7"/>
<dbReference type="OrthoDB" id="5372942at2"/>
<dbReference type="Proteomes" id="UP000002495">
    <property type="component" value="Chromosome"/>
</dbReference>
<dbReference type="GO" id="GO:0005737">
    <property type="term" value="C:cytoplasm"/>
    <property type="evidence" value="ECO:0007669"/>
    <property type="project" value="UniProtKB-SubCell"/>
</dbReference>
<dbReference type="GO" id="GO:0044780">
    <property type="term" value="P:bacterial-type flagellum assembly"/>
    <property type="evidence" value="ECO:0007669"/>
    <property type="project" value="UniProtKB-UniRule"/>
</dbReference>
<dbReference type="GO" id="GO:0006417">
    <property type="term" value="P:regulation of translation"/>
    <property type="evidence" value="ECO:0007669"/>
    <property type="project" value="UniProtKB-KW"/>
</dbReference>
<dbReference type="Gene3D" id="2.30.290.10">
    <property type="entry name" value="BH3618-like"/>
    <property type="match status" value="1"/>
</dbReference>
<dbReference type="HAMAP" id="MF_01185">
    <property type="entry name" value="FliW"/>
    <property type="match status" value="1"/>
</dbReference>
<dbReference type="InterPro" id="IPR003775">
    <property type="entry name" value="Flagellar_assembly_factor_FliW"/>
</dbReference>
<dbReference type="InterPro" id="IPR024046">
    <property type="entry name" value="Flagellar_assmbl_FliW_dom_sf"/>
</dbReference>
<dbReference type="NCBIfam" id="NF009791">
    <property type="entry name" value="PRK13283.1"/>
    <property type="match status" value="1"/>
</dbReference>
<dbReference type="PANTHER" id="PTHR39190">
    <property type="entry name" value="FLAGELLAR ASSEMBLY FACTOR FLIW"/>
    <property type="match status" value="1"/>
</dbReference>
<dbReference type="PANTHER" id="PTHR39190:SF1">
    <property type="entry name" value="FLAGELLAR ASSEMBLY FACTOR FLIW"/>
    <property type="match status" value="1"/>
</dbReference>
<dbReference type="Pfam" id="PF02623">
    <property type="entry name" value="FliW"/>
    <property type="match status" value="1"/>
</dbReference>
<dbReference type="SUPFAM" id="SSF141457">
    <property type="entry name" value="BH3618-like"/>
    <property type="match status" value="1"/>
</dbReference>
<accession>Q7VHN3</accession>
<comment type="function">
    <text evidence="1">Acts as an anti-CsrA protein, binds CsrA and prevents it from repressing translation of its target genes, one of which is flagellin. Binds to flagellin and participates in the assembly of the flagellum.</text>
</comment>
<comment type="subunit">
    <text evidence="1">Interacts with translational regulator CsrA and flagellin(s).</text>
</comment>
<comment type="subcellular location">
    <subcellularLocation>
        <location evidence="1">Cytoplasm</location>
    </subcellularLocation>
</comment>
<comment type="similarity">
    <text evidence="1">Belongs to the FliW family.</text>
</comment>
<keyword id="KW-1005">Bacterial flagellum biogenesis</keyword>
<keyword id="KW-0143">Chaperone</keyword>
<keyword id="KW-0963">Cytoplasm</keyword>
<keyword id="KW-1185">Reference proteome</keyword>
<keyword id="KW-0810">Translation regulation</keyword>